<protein>
    <recommendedName>
        <fullName>Putative uncharacterized transmembrane protein DDB_G0293652</fullName>
    </recommendedName>
</protein>
<sequence>MLSKIIIIIFIVINFINIIISSITFDIDCRDIINGGINPSSSSSNSNSGSDYSGEIILNLKNKECKDYHIEELLNNYYIQNNNNNNNNIITINGNETFGTTIIQSKKQPFLNLINDNSNNSTTTKSISLNITINNINFNNWITPILYMETINNNIDFINTNFNNHSNEILISYPIISNNDSNDNNSINKTLNSINLNNCKFENFNYLTKLNNLIMPIKLKQTSISVKTSTFINLSMNNTFFHLNQSSLTISNCSTNNITTNNFSFITLINSPTIISNYNHSNSNGSFINHINNNNDLIDFSNENMLIEFSNFNNNLILPQPQPQLELLEQRLQQLNNSDYNNNNNNNNNNNNNNNNNNNNNNNSFNENINGFIILDCENKTEKANVLFYSNQFINIMPYNINFNYSIINIKNINLILNNNNIINNINSNSNNNNSGIISKANFNNQNLIHIVNSNLTLIDSKIESDNPIGGEYSTVYIDSPSNDKIGWNKSNNTNSSDDDDSNSNSSSSGGGSGDNNSIGSSDNSKNKNNKLEWCFDCDGCVFSISTDKNVTLTNSDICPDPDAPNNSNDNGNGNGGGSGKKSYKNTILAVTISAIGIICVALLLTVVILKRRNRKSSFDYLLINQYYLDDEEEKRELLLNRNNNYYYDNNIIDN</sequence>
<accession>Q54BF2</accession>
<evidence type="ECO:0000255" key="1"/>
<evidence type="ECO:0000256" key="2">
    <source>
        <dbReference type="SAM" id="MobiDB-lite"/>
    </source>
</evidence>
<evidence type="ECO:0000305" key="3"/>
<proteinExistence type="predicted"/>
<comment type="subcellular location">
    <subcellularLocation>
        <location evidence="3">Membrane</location>
        <topology evidence="3">Multi-pass membrane protein</topology>
    </subcellularLocation>
</comment>
<dbReference type="EMBL" id="AAFI02000218">
    <property type="protein sequence ID" value="EAL60638.1"/>
    <property type="molecule type" value="Genomic_DNA"/>
</dbReference>
<dbReference type="RefSeq" id="XP_629077.1">
    <property type="nucleotide sequence ID" value="XM_629075.1"/>
</dbReference>
<dbReference type="SMR" id="Q54BF2"/>
<dbReference type="PaxDb" id="44689-DDB0192073"/>
<dbReference type="EnsemblProtists" id="EAL60638">
    <property type="protein sequence ID" value="EAL60638"/>
    <property type="gene ID" value="DDB_G0293652"/>
</dbReference>
<dbReference type="GeneID" id="8629369"/>
<dbReference type="KEGG" id="ddi:DDB_G0293652"/>
<dbReference type="dictyBase" id="DDB_G0293652"/>
<dbReference type="VEuPathDB" id="AmoebaDB:DDB_G0293652"/>
<dbReference type="HOGENOM" id="CLU_418848_0_0_1"/>
<dbReference type="InParanoid" id="Q54BF2"/>
<dbReference type="PRO" id="PR:Q54BF2"/>
<dbReference type="Proteomes" id="UP000002195">
    <property type="component" value="Chromosome 6"/>
</dbReference>
<dbReference type="GO" id="GO:0016020">
    <property type="term" value="C:membrane"/>
    <property type="evidence" value="ECO:0007669"/>
    <property type="project" value="UniProtKB-SubCell"/>
</dbReference>
<keyword id="KW-0472">Membrane</keyword>
<keyword id="KW-1185">Reference proteome</keyword>
<keyword id="KW-0812">Transmembrane</keyword>
<keyword id="KW-1133">Transmembrane helix</keyword>
<gene>
    <name type="ORF">DDB_G0293652</name>
</gene>
<feature type="chain" id="PRO_0000343938" description="Putative uncharacterized transmembrane protein DDB_G0293652">
    <location>
        <begin position="1"/>
        <end position="655"/>
    </location>
</feature>
<feature type="transmembrane region" description="Helical" evidence="1">
    <location>
        <begin position="5"/>
        <end position="25"/>
    </location>
</feature>
<feature type="transmembrane region" description="Helical" evidence="1">
    <location>
        <begin position="588"/>
        <end position="608"/>
    </location>
</feature>
<feature type="region of interest" description="Disordered" evidence="2">
    <location>
        <begin position="337"/>
        <end position="363"/>
    </location>
</feature>
<feature type="region of interest" description="Disordered" evidence="2">
    <location>
        <begin position="484"/>
        <end position="525"/>
    </location>
</feature>
<feature type="compositionally biased region" description="Low complexity" evidence="2">
    <location>
        <begin position="515"/>
        <end position="524"/>
    </location>
</feature>
<name>Y2073_DICDI</name>
<organism>
    <name type="scientific">Dictyostelium discoideum</name>
    <name type="common">Social amoeba</name>
    <dbReference type="NCBI Taxonomy" id="44689"/>
    <lineage>
        <taxon>Eukaryota</taxon>
        <taxon>Amoebozoa</taxon>
        <taxon>Evosea</taxon>
        <taxon>Eumycetozoa</taxon>
        <taxon>Dictyostelia</taxon>
        <taxon>Dictyosteliales</taxon>
        <taxon>Dictyosteliaceae</taxon>
        <taxon>Dictyostelium</taxon>
    </lineage>
</organism>
<reference key="1">
    <citation type="journal article" date="2005" name="Nature">
        <title>The genome of the social amoeba Dictyostelium discoideum.</title>
        <authorList>
            <person name="Eichinger L."/>
            <person name="Pachebat J.A."/>
            <person name="Gloeckner G."/>
            <person name="Rajandream M.A."/>
            <person name="Sucgang R."/>
            <person name="Berriman M."/>
            <person name="Song J."/>
            <person name="Olsen R."/>
            <person name="Szafranski K."/>
            <person name="Xu Q."/>
            <person name="Tunggal B."/>
            <person name="Kummerfeld S."/>
            <person name="Madera M."/>
            <person name="Konfortov B.A."/>
            <person name="Rivero F."/>
            <person name="Bankier A.T."/>
            <person name="Lehmann R."/>
            <person name="Hamlin N."/>
            <person name="Davies R."/>
            <person name="Gaudet P."/>
            <person name="Fey P."/>
            <person name="Pilcher K."/>
            <person name="Chen G."/>
            <person name="Saunders D."/>
            <person name="Sodergren E.J."/>
            <person name="Davis P."/>
            <person name="Kerhornou A."/>
            <person name="Nie X."/>
            <person name="Hall N."/>
            <person name="Anjard C."/>
            <person name="Hemphill L."/>
            <person name="Bason N."/>
            <person name="Farbrother P."/>
            <person name="Desany B."/>
            <person name="Just E."/>
            <person name="Morio T."/>
            <person name="Rost R."/>
            <person name="Churcher C.M."/>
            <person name="Cooper J."/>
            <person name="Haydock S."/>
            <person name="van Driessche N."/>
            <person name="Cronin A."/>
            <person name="Goodhead I."/>
            <person name="Muzny D.M."/>
            <person name="Mourier T."/>
            <person name="Pain A."/>
            <person name="Lu M."/>
            <person name="Harper D."/>
            <person name="Lindsay R."/>
            <person name="Hauser H."/>
            <person name="James K.D."/>
            <person name="Quiles M."/>
            <person name="Madan Babu M."/>
            <person name="Saito T."/>
            <person name="Buchrieser C."/>
            <person name="Wardroper A."/>
            <person name="Felder M."/>
            <person name="Thangavelu M."/>
            <person name="Johnson D."/>
            <person name="Knights A."/>
            <person name="Loulseged H."/>
            <person name="Mungall K.L."/>
            <person name="Oliver K."/>
            <person name="Price C."/>
            <person name="Quail M.A."/>
            <person name="Urushihara H."/>
            <person name="Hernandez J."/>
            <person name="Rabbinowitsch E."/>
            <person name="Steffen D."/>
            <person name="Sanders M."/>
            <person name="Ma J."/>
            <person name="Kohara Y."/>
            <person name="Sharp S."/>
            <person name="Simmonds M.N."/>
            <person name="Spiegler S."/>
            <person name="Tivey A."/>
            <person name="Sugano S."/>
            <person name="White B."/>
            <person name="Walker D."/>
            <person name="Woodward J.R."/>
            <person name="Winckler T."/>
            <person name="Tanaka Y."/>
            <person name="Shaulsky G."/>
            <person name="Schleicher M."/>
            <person name="Weinstock G.M."/>
            <person name="Rosenthal A."/>
            <person name="Cox E.C."/>
            <person name="Chisholm R.L."/>
            <person name="Gibbs R.A."/>
            <person name="Loomis W.F."/>
            <person name="Platzer M."/>
            <person name="Kay R.R."/>
            <person name="Williams J.G."/>
            <person name="Dear P.H."/>
            <person name="Noegel A.A."/>
            <person name="Barrell B.G."/>
            <person name="Kuspa A."/>
        </authorList>
    </citation>
    <scope>NUCLEOTIDE SEQUENCE [LARGE SCALE GENOMIC DNA]</scope>
    <source>
        <strain>AX4</strain>
    </source>
</reference>